<evidence type="ECO:0000255" key="1">
    <source>
        <dbReference type="HAMAP-Rule" id="MF_00081"/>
    </source>
</evidence>
<name>HRCA_STRSV</name>
<comment type="function">
    <text evidence="1">Negative regulator of class I heat shock genes (grpE-dnaK-dnaJ and groELS operons). Prevents heat-shock induction of these operons.</text>
</comment>
<comment type="similarity">
    <text evidence="1">Belongs to the HrcA family.</text>
</comment>
<organism>
    <name type="scientific">Streptococcus sanguinis (strain SK36)</name>
    <dbReference type="NCBI Taxonomy" id="388919"/>
    <lineage>
        <taxon>Bacteria</taxon>
        <taxon>Bacillati</taxon>
        <taxon>Bacillota</taxon>
        <taxon>Bacilli</taxon>
        <taxon>Lactobacillales</taxon>
        <taxon>Streptococcaceae</taxon>
        <taxon>Streptococcus</taxon>
    </lineage>
</organism>
<gene>
    <name evidence="1" type="primary">hrcA</name>
    <name type="ordered locus">SSA_2009</name>
</gene>
<accession>A3CQC4</accession>
<protein>
    <recommendedName>
        <fullName evidence="1">Heat-inducible transcription repressor HrcA</fullName>
    </recommendedName>
</protein>
<feature type="chain" id="PRO_1000010463" description="Heat-inducible transcription repressor HrcA">
    <location>
        <begin position="1"/>
        <end position="344"/>
    </location>
</feature>
<reference key="1">
    <citation type="journal article" date="2007" name="J. Bacteriol.">
        <title>Genome of the opportunistic pathogen Streptococcus sanguinis.</title>
        <authorList>
            <person name="Xu P."/>
            <person name="Alves J.M."/>
            <person name="Kitten T."/>
            <person name="Brown A."/>
            <person name="Chen Z."/>
            <person name="Ozaki L.S."/>
            <person name="Manque P."/>
            <person name="Ge X."/>
            <person name="Serrano M.G."/>
            <person name="Puiu D."/>
            <person name="Hendricks S."/>
            <person name="Wang Y."/>
            <person name="Chaplin M.D."/>
            <person name="Akan D."/>
            <person name="Paik S."/>
            <person name="Peterson D.L."/>
            <person name="Macrina F.L."/>
            <person name="Buck G.A."/>
        </authorList>
    </citation>
    <scope>NUCLEOTIDE SEQUENCE [LARGE SCALE GENOMIC DNA]</scope>
    <source>
        <strain>SK36</strain>
    </source>
</reference>
<dbReference type="EMBL" id="CP000387">
    <property type="protein sequence ID" value="ABN45379.1"/>
    <property type="molecule type" value="Genomic_DNA"/>
</dbReference>
<dbReference type="RefSeq" id="WP_011837494.1">
    <property type="nucleotide sequence ID" value="NC_009009.1"/>
</dbReference>
<dbReference type="RefSeq" id="YP_001035929.1">
    <property type="nucleotide sequence ID" value="NC_009009.1"/>
</dbReference>
<dbReference type="SMR" id="A3CQC4"/>
<dbReference type="STRING" id="388919.SSA_2009"/>
<dbReference type="KEGG" id="ssa:SSA_2009"/>
<dbReference type="PATRIC" id="fig|388919.9.peg.1904"/>
<dbReference type="eggNOG" id="COG1420">
    <property type="taxonomic scope" value="Bacteria"/>
</dbReference>
<dbReference type="HOGENOM" id="CLU_050019_1_0_9"/>
<dbReference type="OrthoDB" id="9783139at2"/>
<dbReference type="Proteomes" id="UP000002148">
    <property type="component" value="Chromosome"/>
</dbReference>
<dbReference type="GO" id="GO:0003677">
    <property type="term" value="F:DNA binding"/>
    <property type="evidence" value="ECO:0007669"/>
    <property type="project" value="InterPro"/>
</dbReference>
<dbReference type="GO" id="GO:0045892">
    <property type="term" value="P:negative regulation of DNA-templated transcription"/>
    <property type="evidence" value="ECO:0007669"/>
    <property type="project" value="UniProtKB-UniRule"/>
</dbReference>
<dbReference type="Gene3D" id="3.30.450.40">
    <property type="match status" value="1"/>
</dbReference>
<dbReference type="Gene3D" id="3.30.390.60">
    <property type="entry name" value="Heat-inducible transcription repressor hrca homolog, domain 3"/>
    <property type="match status" value="1"/>
</dbReference>
<dbReference type="Gene3D" id="1.10.10.10">
    <property type="entry name" value="Winged helix-like DNA-binding domain superfamily/Winged helix DNA-binding domain"/>
    <property type="match status" value="1"/>
</dbReference>
<dbReference type="HAMAP" id="MF_00081">
    <property type="entry name" value="HrcA"/>
    <property type="match status" value="1"/>
</dbReference>
<dbReference type="InterPro" id="IPR029016">
    <property type="entry name" value="GAF-like_dom_sf"/>
</dbReference>
<dbReference type="InterPro" id="IPR002571">
    <property type="entry name" value="HrcA"/>
</dbReference>
<dbReference type="InterPro" id="IPR021153">
    <property type="entry name" value="HrcA_C"/>
</dbReference>
<dbReference type="InterPro" id="IPR036388">
    <property type="entry name" value="WH-like_DNA-bd_sf"/>
</dbReference>
<dbReference type="InterPro" id="IPR036390">
    <property type="entry name" value="WH_DNA-bd_sf"/>
</dbReference>
<dbReference type="InterPro" id="IPR005104">
    <property type="entry name" value="WHTH_HrcA_DNA-bd"/>
</dbReference>
<dbReference type="InterPro" id="IPR023120">
    <property type="entry name" value="WHTH_transcript_rep_HrcA_IDD"/>
</dbReference>
<dbReference type="NCBIfam" id="TIGR00331">
    <property type="entry name" value="hrcA"/>
    <property type="match status" value="1"/>
</dbReference>
<dbReference type="PANTHER" id="PTHR34824">
    <property type="entry name" value="HEAT-INDUCIBLE TRANSCRIPTION REPRESSOR HRCA"/>
    <property type="match status" value="1"/>
</dbReference>
<dbReference type="PANTHER" id="PTHR34824:SF1">
    <property type="entry name" value="HEAT-INDUCIBLE TRANSCRIPTION REPRESSOR HRCA"/>
    <property type="match status" value="1"/>
</dbReference>
<dbReference type="Pfam" id="PF01628">
    <property type="entry name" value="HrcA"/>
    <property type="match status" value="1"/>
</dbReference>
<dbReference type="Pfam" id="PF03444">
    <property type="entry name" value="HrcA_DNA-bdg"/>
    <property type="match status" value="1"/>
</dbReference>
<dbReference type="PIRSF" id="PIRSF005485">
    <property type="entry name" value="HrcA"/>
    <property type="match status" value="1"/>
</dbReference>
<dbReference type="SUPFAM" id="SSF55781">
    <property type="entry name" value="GAF domain-like"/>
    <property type="match status" value="1"/>
</dbReference>
<dbReference type="SUPFAM" id="SSF46785">
    <property type="entry name" value="Winged helix' DNA-binding domain"/>
    <property type="match status" value="1"/>
</dbReference>
<sequence length="344" mass="39332">MVTERQNEILNLIIDIFTKTHEPVGSKALQDSINSSSATIRNDMAALEKQGLLEKAHTSSGRKPSVAGFQYFVKHSLSFDRLAENELYEVIKAFDHEFFNLEDILQQAADLLTKLSGCTVVALDVEPSRQRLTAFDIVVLSQHTALAVFTLDESNTITSQFMIPRNFLKEDLDRLKGLVRERFLGQTVLDIHYKIRTEIPQIIQRYFTTTDNVIQLFEHIFGDIFKENVILSGKVQLLEFSDLTAYQFFDDPQKVAFEIRDSLAEDQMQSVRVADSRESCLADLTLISSKFLIPYRGFGVLAVVGPVNLDYQRLVSQMNVVNRVLTMKLTDFYRYLSSNHYEVH</sequence>
<keyword id="KW-1185">Reference proteome</keyword>
<keyword id="KW-0678">Repressor</keyword>
<keyword id="KW-0346">Stress response</keyword>
<keyword id="KW-0804">Transcription</keyword>
<keyword id="KW-0805">Transcription regulation</keyword>
<proteinExistence type="inferred from homology"/>